<feature type="chain" id="PRO_0000326352" description="Matrix protein 2">
    <location>
        <begin position="1"/>
        <end position="97"/>
    </location>
</feature>
<feature type="topological domain" description="Virion surface" evidence="1">
    <location>
        <begin position="1"/>
        <end position="22"/>
    </location>
</feature>
<feature type="transmembrane region" description="Helical; Signal-anchor for type III membrane protein" evidence="1">
    <location>
        <begin position="23"/>
        <end position="43"/>
    </location>
</feature>
<feature type="topological domain" description="Intravirion" evidence="1">
    <location>
        <begin position="44"/>
        <end position="97"/>
    </location>
</feature>
<feature type="region of interest" description="Disordered" evidence="2">
    <location>
        <begin position="60"/>
        <end position="83"/>
    </location>
</feature>
<feature type="site" description="Essential for channel activity, possibly by being protonated during channel activation, and by forming the channel gate and the selective filter" evidence="1">
    <location>
        <position position="37"/>
    </location>
</feature>
<feature type="site" description="Seems to be involved in pH gating" evidence="1">
    <location>
        <position position="41"/>
    </location>
</feature>
<feature type="modified residue" description="Phosphoserine; by host" evidence="1">
    <location>
        <position position="64"/>
    </location>
</feature>
<feature type="modified residue" description="Phosphoserine; by host" evidence="1">
    <location>
        <position position="82"/>
    </location>
</feature>
<feature type="lipid moiety-binding region" description="S-palmitoyl cysteine; by host" evidence="1">
    <location>
        <position position="50"/>
    </location>
</feature>
<feature type="disulfide bond" description="Interchain (with C-17)" evidence="1">
    <location>
        <position position="17"/>
    </location>
</feature>
<feature type="disulfide bond" description="Interchain (with C-19)" evidence="1">
    <location>
        <position position="19"/>
    </location>
</feature>
<evidence type="ECO:0000255" key="1">
    <source>
        <dbReference type="HAMAP-Rule" id="MF_04069"/>
    </source>
</evidence>
<evidence type="ECO:0000256" key="2">
    <source>
        <dbReference type="SAM" id="MobiDB-lite"/>
    </source>
</evidence>
<dbReference type="EMBL" id="AF073197">
    <property type="protein sequence ID" value="AAD25206.1"/>
    <property type="molecule type" value="Genomic_RNA"/>
</dbReference>
<dbReference type="SMR" id="Q77W49"/>
<dbReference type="GO" id="GO:0020002">
    <property type="term" value="C:host cell plasma membrane"/>
    <property type="evidence" value="ECO:0007669"/>
    <property type="project" value="UniProtKB-SubCell"/>
</dbReference>
<dbReference type="GO" id="GO:0016020">
    <property type="term" value="C:membrane"/>
    <property type="evidence" value="ECO:0007669"/>
    <property type="project" value="UniProtKB-UniRule"/>
</dbReference>
<dbReference type="GO" id="GO:0055036">
    <property type="term" value="C:virion membrane"/>
    <property type="evidence" value="ECO:0007669"/>
    <property type="project" value="UniProtKB-SubCell"/>
</dbReference>
<dbReference type="GO" id="GO:0005216">
    <property type="term" value="F:monoatomic ion channel activity"/>
    <property type="evidence" value="ECO:0007669"/>
    <property type="project" value="UniProtKB-UniRule"/>
</dbReference>
<dbReference type="GO" id="GO:0015078">
    <property type="term" value="F:proton transmembrane transporter activity"/>
    <property type="evidence" value="ECO:0007669"/>
    <property type="project" value="UniProtKB-UniRule"/>
</dbReference>
<dbReference type="GO" id="GO:0051259">
    <property type="term" value="P:protein complex oligomerization"/>
    <property type="evidence" value="ECO:0007669"/>
    <property type="project" value="UniProtKB-UniRule"/>
</dbReference>
<dbReference type="GO" id="GO:0044694">
    <property type="term" value="P:symbiont genome entry into host cell via pore formation in plasma membrane"/>
    <property type="evidence" value="ECO:0007669"/>
    <property type="project" value="UniProtKB-UniRule"/>
</dbReference>
<dbReference type="GO" id="GO:0140321">
    <property type="term" value="P:symbiont-mediated suppression of host autophagy"/>
    <property type="evidence" value="ECO:0007669"/>
    <property type="project" value="UniProtKB-KW"/>
</dbReference>
<dbReference type="Gene3D" id="6.10.250.1640">
    <property type="match status" value="1"/>
</dbReference>
<dbReference type="HAMAP" id="MF_04069">
    <property type="entry name" value="INFV_M2"/>
    <property type="match status" value="1"/>
</dbReference>
<dbReference type="InterPro" id="IPR002089">
    <property type="entry name" value="Flu_M2"/>
</dbReference>
<dbReference type="Pfam" id="PF00599">
    <property type="entry name" value="Flu_M2"/>
    <property type="match status" value="1"/>
</dbReference>
<comment type="function">
    <text evidence="1">Forms a proton-selective ion channel that is necessary for the efficient release of the viral genome during virus entry. After attaching to the cell surface, the virion enters the cell by endocytosis. Acidification of the endosome triggers M2 ion channel activity. The influx of protons into virion interior is believed to disrupt interactions between the viral ribonucleoprotein (RNP), matrix protein 1 (M1), and lipid bilayers, thereby freeing the viral genome from interaction with viral proteins and enabling RNA segments to migrate to the host cell nucleus, where influenza virus RNA transcription and replication occur. Also plays a role in viral proteins secretory pathway. Elevates the intravesicular pH of normally acidic compartments, such as trans-Golgi network, preventing newly formed hemagglutinin from premature switching to the fusion-active conformation.</text>
</comment>
<comment type="activity regulation">
    <text>The M2 protein from most influenza A strains is inhibited by amantadine and rimantadine, resulting in viral uncoating incapacity. Emergence of amantadine-resistant variants is usually rapid.</text>
</comment>
<comment type="subunit">
    <text evidence="1">Homotetramer; composed of two disulfide-linked dimers held together by non-covalent interactions. May interact with matrix protein 1.</text>
</comment>
<comment type="subcellular location">
    <subcellularLocation>
        <location evidence="1">Virion membrane</location>
    </subcellularLocation>
    <subcellularLocation>
        <location evidence="1">Host apical cell membrane</location>
        <topology evidence="1">Single-pass type III membrane protein</topology>
    </subcellularLocation>
    <text evidence="1">Abundantly expressed at the apical plasma membrane in infected polarized epithelial cells, in close proximity to budding and assembled virions. Minor component of virions (only 16-20 molecules/virion).</text>
</comment>
<comment type="alternative products">
    <event type="alternative splicing"/>
    <isoform>
        <id>Q77W49-1</id>
        <name>M2</name>
        <sequence type="displayed"/>
    </isoform>
    <isoform>
        <id>Q77W48-1</id>
        <name>M1</name>
        <sequence type="external"/>
    </isoform>
    <text>Only the first 9 residues are shared by the 2 isoforms.</text>
</comment>
<comment type="domain">
    <text evidence="1">Cytoplasmic tail plays an important role in virion assembly and morphogenesis.</text>
</comment>
<comment type="miscellaneous">
    <text evidence="1">When the channel is activated, one or more imidazole moieties of His-37 probably become bi-protonated.</text>
</comment>
<comment type="similarity">
    <text evidence="1">Belongs to the influenza viruses matrix protein M2 family.</text>
</comment>
<sequence length="97" mass="11158">MSLLTEVETPTRNGWECKCSDSSDPLVIAASIIGILHLILWILDRLFFKCIYRRLKYGLKRGPSTEGVPESMREEYRQEQQSAVDVDDGHFVNIELE</sequence>
<keyword id="KW-0025">Alternative splicing</keyword>
<keyword id="KW-1015">Disulfide bond</keyword>
<keyword id="KW-1032">Host cell membrane</keyword>
<keyword id="KW-1043">Host membrane</keyword>
<keyword id="KW-0945">Host-virus interaction</keyword>
<keyword id="KW-0375">Hydrogen ion transport</keyword>
<keyword id="KW-1083">Inhibition of host autophagy by virus</keyword>
<keyword id="KW-0407">Ion channel</keyword>
<keyword id="KW-0406">Ion transport</keyword>
<keyword id="KW-0449">Lipoprotein</keyword>
<keyword id="KW-0472">Membrane</keyword>
<keyword id="KW-0564">Palmitate</keyword>
<keyword id="KW-0597">Phosphoprotein</keyword>
<keyword id="KW-0735">Signal-anchor</keyword>
<keyword id="KW-0812">Transmembrane</keyword>
<keyword id="KW-1133">Transmembrane helix</keyword>
<keyword id="KW-0813">Transport</keyword>
<keyword id="KW-1182">Viral ion channel</keyword>
<keyword id="KW-0946">Virion</keyword>
<reference key="1">
    <citation type="journal article" date="1999" name="J. Virol.">
        <title>Phylogenetic analysis of H7 avian influenza viruses isolated from the live bird markets of the Northeast United States.</title>
        <authorList>
            <person name="Suarez D.L."/>
            <person name="Garcia M."/>
            <person name="Latimer J."/>
            <person name="Senne D."/>
            <person name="Perdue M."/>
        </authorList>
    </citation>
    <scope>NUCLEOTIDE SEQUENCE [GENOMIC RNA]</scope>
</reference>
<organism>
    <name type="scientific">Influenza A virus (strain A/Turkey/Oregon/1971 H7N3)</name>
    <dbReference type="NCBI Taxonomy" id="385636"/>
    <lineage>
        <taxon>Viruses</taxon>
        <taxon>Riboviria</taxon>
        <taxon>Orthornavirae</taxon>
        <taxon>Negarnaviricota</taxon>
        <taxon>Polyploviricotina</taxon>
        <taxon>Insthoviricetes</taxon>
        <taxon>Articulavirales</taxon>
        <taxon>Orthomyxoviridae</taxon>
        <taxon>Alphainfluenzavirus</taxon>
        <taxon>Alphainfluenzavirus influenzae</taxon>
        <taxon>Influenza A virus</taxon>
    </lineage>
</organism>
<organismHost>
    <name type="scientific">Aves</name>
    <dbReference type="NCBI Taxonomy" id="8782"/>
</organismHost>
<proteinExistence type="inferred from homology"/>
<accession>Q77W49</accession>
<name>M2_I71A2</name>
<protein>
    <recommendedName>
        <fullName evidence="1">Matrix protein 2</fullName>
    </recommendedName>
    <alternativeName>
        <fullName evidence="1">Proton channel protein M2</fullName>
    </alternativeName>
</protein>
<gene>
    <name evidence="1" type="primary">M</name>
</gene>